<accession>Q5E2E3</accession>
<feature type="chain" id="PRO_0000166647" description="Phosphoenolpyruvate carboxylase">
    <location>
        <begin position="1"/>
        <end position="876"/>
    </location>
</feature>
<feature type="active site" evidence="1">
    <location>
        <position position="138"/>
    </location>
</feature>
<feature type="active site" evidence="1">
    <location>
        <position position="543"/>
    </location>
</feature>
<gene>
    <name evidence="1" type="primary">ppc</name>
    <name type="ordered locus">VF_2308</name>
</gene>
<sequence>MNEKYAALKSNVSMLGHLLGNTIRDAHGEELLAKVETIRKLSKTARAGSDEDRNALIEEIKSLPDDQLTPVARAFSQFLNLTNMAEQYHTISRHCEAHVCEPDAISTLFSKLSQSNVSKLDTAQAVRELNIELVLTAHPTEIARRTMINKLVKINECLSKLELGDISFSERDKTERRLEQLIAQAWHSDVIRQERPTPLDEAKWGFAVVENSLWQGIPEFLREFDQRLEGHLGEGLPIDARPVHMSSWMGGDRDGNPFVTHKITREVMLLSRWKAADLYLKDINELISELSMVKCTDEVRELAGDQHEPYRAILKQLRTLLGDTLESLDAQMKGELAPNKVILTDADQLWNPLYACYQSLHACGMGIIADGSLLDTLRRVKAFGAHLVRLDIRQESTRHSDVLSELTRYLGIGDYDQWSEQDKISFLVNELSSKRPLLPRKWEPSPEVQEVIDTCKVVAEQSKEALGSYVISMARTASDVLAVHLLLQEAGCPFRMDVCPLFETLDDLNRSKEVMEQLFSIDWYRGFIQNHQMVMIGYSDSAKDAGVMSAGWAQYSAMEALVEVCEKESIELTLFHGRGGTIGRGGAPAHAALLSQPPKSLKGGLRVTEQGEMIRFKLGLPEVAVNSFNLYASAILEANLLPPPEPKQEWRDLMEVLSEVSCEAYRNVVRGEKDFVPYFRAATPELELGKLPLGSRPAKRNPNGGVESLRAIPWIFSWSQNRLVLPAWLGAGEAIQYSIDKGHQALLEEMCREWPFFSTRLGMLEMVYTKCNPQMSEYYDQRLTDKSLWPLGERLRNQLQADIKAVLNVENNDHLMERDPWGSESIRLRNIYVDPLNMLQAELLFRTRQQEETSPELEEALMVTIAGIAAGMRNTG</sequence>
<organism>
    <name type="scientific">Aliivibrio fischeri (strain ATCC 700601 / ES114)</name>
    <name type="common">Vibrio fischeri</name>
    <dbReference type="NCBI Taxonomy" id="312309"/>
    <lineage>
        <taxon>Bacteria</taxon>
        <taxon>Pseudomonadati</taxon>
        <taxon>Pseudomonadota</taxon>
        <taxon>Gammaproteobacteria</taxon>
        <taxon>Vibrionales</taxon>
        <taxon>Vibrionaceae</taxon>
        <taxon>Aliivibrio</taxon>
    </lineage>
</organism>
<proteinExistence type="inferred from homology"/>
<comment type="function">
    <text evidence="1">Forms oxaloacetate, a four-carbon dicarboxylic acid source for the tricarboxylic acid cycle.</text>
</comment>
<comment type="catalytic activity">
    <reaction evidence="1">
        <text>oxaloacetate + phosphate = phosphoenolpyruvate + hydrogencarbonate</text>
        <dbReference type="Rhea" id="RHEA:28370"/>
        <dbReference type="ChEBI" id="CHEBI:16452"/>
        <dbReference type="ChEBI" id="CHEBI:17544"/>
        <dbReference type="ChEBI" id="CHEBI:43474"/>
        <dbReference type="ChEBI" id="CHEBI:58702"/>
        <dbReference type="EC" id="4.1.1.31"/>
    </reaction>
</comment>
<comment type="cofactor">
    <cofactor evidence="1">
        <name>Mg(2+)</name>
        <dbReference type="ChEBI" id="CHEBI:18420"/>
    </cofactor>
</comment>
<comment type="similarity">
    <text evidence="1">Belongs to the PEPCase type 1 family.</text>
</comment>
<evidence type="ECO:0000255" key="1">
    <source>
        <dbReference type="HAMAP-Rule" id="MF_00595"/>
    </source>
</evidence>
<protein>
    <recommendedName>
        <fullName evidence="1">Phosphoenolpyruvate carboxylase</fullName>
        <shortName evidence="1">PEPC</shortName>
        <shortName evidence="1">PEPCase</shortName>
        <ecNumber evidence="1">4.1.1.31</ecNumber>
    </recommendedName>
</protein>
<dbReference type="EC" id="4.1.1.31" evidence="1"/>
<dbReference type="EMBL" id="CP000020">
    <property type="protein sequence ID" value="AAW86803.1"/>
    <property type="molecule type" value="Genomic_DNA"/>
</dbReference>
<dbReference type="RefSeq" id="WP_011262715.1">
    <property type="nucleotide sequence ID" value="NC_006840.2"/>
</dbReference>
<dbReference type="RefSeq" id="YP_205691.1">
    <property type="nucleotide sequence ID" value="NC_006840.2"/>
</dbReference>
<dbReference type="SMR" id="Q5E2E3"/>
<dbReference type="STRING" id="312309.VF_2308"/>
<dbReference type="EnsemblBacteria" id="AAW86803">
    <property type="protein sequence ID" value="AAW86803"/>
    <property type="gene ID" value="VF_2308"/>
</dbReference>
<dbReference type="GeneID" id="54165023"/>
<dbReference type="KEGG" id="vfi:VF_2308"/>
<dbReference type="PATRIC" id="fig|312309.11.peg.2346"/>
<dbReference type="eggNOG" id="COG2352">
    <property type="taxonomic scope" value="Bacteria"/>
</dbReference>
<dbReference type="HOGENOM" id="CLU_006557_2_0_6"/>
<dbReference type="OrthoDB" id="9768133at2"/>
<dbReference type="Proteomes" id="UP000000537">
    <property type="component" value="Chromosome I"/>
</dbReference>
<dbReference type="GO" id="GO:0005829">
    <property type="term" value="C:cytosol"/>
    <property type="evidence" value="ECO:0007669"/>
    <property type="project" value="TreeGrafter"/>
</dbReference>
<dbReference type="GO" id="GO:0000287">
    <property type="term" value="F:magnesium ion binding"/>
    <property type="evidence" value="ECO:0007669"/>
    <property type="project" value="UniProtKB-UniRule"/>
</dbReference>
<dbReference type="GO" id="GO:0008964">
    <property type="term" value="F:phosphoenolpyruvate carboxylase activity"/>
    <property type="evidence" value="ECO:0007669"/>
    <property type="project" value="UniProtKB-UniRule"/>
</dbReference>
<dbReference type="GO" id="GO:0015977">
    <property type="term" value="P:carbon fixation"/>
    <property type="evidence" value="ECO:0007669"/>
    <property type="project" value="UniProtKB-UniRule"/>
</dbReference>
<dbReference type="GO" id="GO:0006107">
    <property type="term" value="P:oxaloacetate metabolic process"/>
    <property type="evidence" value="ECO:0007669"/>
    <property type="project" value="UniProtKB-UniRule"/>
</dbReference>
<dbReference type="GO" id="GO:0006099">
    <property type="term" value="P:tricarboxylic acid cycle"/>
    <property type="evidence" value="ECO:0007669"/>
    <property type="project" value="InterPro"/>
</dbReference>
<dbReference type="FunFam" id="1.20.1440.90:FF:000002">
    <property type="entry name" value="Phosphoenolpyruvate carboxylase"/>
    <property type="match status" value="1"/>
</dbReference>
<dbReference type="Gene3D" id="1.20.1440.90">
    <property type="entry name" value="Phosphoenolpyruvate/pyruvate domain"/>
    <property type="match status" value="1"/>
</dbReference>
<dbReference type="HAMAP" id="MF_00595">
    <property type="entry name" value="PEPcase_type1"/>
    <property type="match status" value="1"/>
</dbReference>
<dbReference type="InterPro" id="IPR021135">
    <property type="entry name" value="PEP_COase"/>
</dbReference>
<dbReference type="InterPro" id="IPR022805">
    <property type="entry name" value="PEP_COase_bac/pln-type"/>
</dbReference>
<dbReference type="InterPro" id="IPR018129">
    <property type="entry name" value="PEP_COase_Lys_AS"/>
</dbReference>
<dbReference type="InterPro" id="IPR033129">
    <property type="entry name" value="PEPCASE_His_AS"/>
</dbReference>
<dbReference type="InterPro" id="IPR015813">
    <property type="entry name" value="Pyrv/PenolPyrv_kinase-like_dom"/>
</dbReference>
<dbReference type="NCBIfam" id="NF000584">
    <property type="entry name" value="PRK00009.1"/>
    <property type="match status" value="1"/>
</dbReference>
<dbReference type="PANTHER" id="PTHR30523">
    <property type="entry name" value="PHOSPHOENOLPYRUVATE CARBOXYLASE"/>
    <property type="match status" value="1"/>
</dbReference>
<dbReference type="PANTHER" id="PTHR30523:SF6">
    <property type="entry name" value="PHOSPHOENOLPYRUVATE CARBOXYLASE"/>
    <property type="match status" value="1"/>
</dbReference>
<dbReference type="Pfam" id="PF00311">
    <property type="entry name" value="PEPcase"/>
    <property type="match status" value="1"/>
</dbReference>
<dbReference type="PRINTS" id="PR00150">
    <property type="entry name" value="PEPCARBXLASE"/>
</dbReference>
<dbReference type="SUPFAM" id="SSF51621">
    <property type="entry name" value="Phosphoenolpyruvate/pyruvate domain"/>
    <property type="match status" value="1"/>
</dbReference>
<dbReference type="PROSITE" id="PS00781">
    <property type="entry name" value="PEPCASE_1"/>
    <property type="match status" value="1"/>
</dbReference>
<dbReference type="PROSITE" id="PS00393">
    <property type="entry name" value="PEPCASE_2"/>
    <property type="match status" value="1"/>
</dbReference>
<keyword id="KW-0120">Carbon dioxide fixation</keyword>
<keyword id="KW-0456">Lyase</keyword>
<keyword id="KW-0460">Magnesium</keyword>
<keyword id="KW-1185">Reference proteome</keyword>
<name>CAPP_ALIF1</name>
<reference key="1">
    <citation type="journal article" date="2005" name="Proc. Natl. Acad. Sci. U.S.A.">
        <title>Complete genome sequence of Vibrio fischeri: a symbiotic bacterium with pathogenic congeners.</title>
        <authorList>
            <person name="Ruby E.G."/>
            <person name="Urbanowski M."/>
            <person name="Campbell J."/>
            <person name="Dunn A."/>
            <person name="Faini M."/>
            <person name="Gunsalus R."/>
            <person name="Lostroh P."/>
            <person name="Lupp C."/>
            <person name="McCann J."/>
            <person name="Millikan D."/>
            <person name="Schaefer A."/>
            <person name="Stabb E."/>
            <person name="Stevens A."/>
            <person name="Visick K."/>
            <person name="Whistler C."/>
            <person name="Greenberg E.P."/>
        </authorList>
    </citation>
    <scope>NUCLEOTIDE SEQUENCE [LARGE SCALE GENOMIC DNA]</scope>
    <source>
        <strain>ATCC 700601 / ES114</strain>
    </source>
</reference>